<gene>
    <name evidence="1" type="primary">argS</name>
    <name type="ordered locus">RrIowa_0123</name>
</gene>
<reference key="1">
    <citation type="journal article" date="2008" name="Infect. Immun.">
        <title>Genomic comparison of virulent Rickettsia rickettsii Sheila Smith and avirulent Rickettsia rickettsii Iowa.</title>
        <authorList>
            <person name="Ellison D.W."/>
            <person name="Clark T.R."/>
            <person name="Sturdevant D.E."/>
            <person name="Virtaneva K."/>
            <person name="Porcella S.F."/>
            <person name="Hackstadt T."/>
        </authorList>
    </citation>
    <scope>NUCLEOTIDE SEQUENCE [LARGE SCALE GENOMIC DNA]</scope>
    <source>
        <strain>Iowa</strain>
    </source>
</reference>
<name>SYR_RICRO</name>
<proteinExistence type="inferred from homology"/>
<keyword id="KW-0030">Aminoacyl-tRNA synthetase</keyword>
<keyword id="KW-0067">ATP-binding</keyword>
<keyword id="KW-0963">Cytoplasm</keyword>
<keyword id="KW-0436">Ligase</keyword>
<keyword id="KW-0547">Nucleotide-binding</keyword>
<keyword id="KW-0648">Protein biosynthesis</keyword>
<dbReference type="EC" id="6.1.1.19" evidence="1"/>
<dbReference type="EMBL" id="CP000766">
    <property type="protein sequence ID" value="ABY72043.1"/>
    <property type="molecule type" value="Genomic_DNA"/>
</dbReference>
<dbReference type="RefSeq" id="WP_012150320.1">
    <property type="nucleotide sequence ID" value="NC_010263.3"/>
</dbReference>
<dbReference type="SMR" id="B0BW17"/>
<dbReference type="GeneID" id="79936894"/>
<dbReference type="KEGG" id="rrj:RrIowa_0123"/>
<dbReference type="eggNOG" id="COG0018">
    <property type="taxonomic scope" value="Bacteria"/>
</dbReference>
<dbReference type="HOGENOM" id="CLU_006406_0_1_5"/>
<dbReference type="Proteomes" id="UP000000796">
    <property type="component" value="Chromosome"/>
</dbReference>
<dbReference type="GO" id="GO:0005737">
    <property type="term" value="C:cytoplasm"/>
    <property type="evidence" value="ECO:0007669"/>
    <property type="project" value="UniProtKB-SubCell"/>
</dbReference>
<dbReference type="GO" id="GO:0004814">
    <property type="term" value="F:arginine-tRNA ligase activity"/>
    <property type="evidence" value="ECO:0007669"/>
    <property type="project" value="UniProtKB-UniRule"/>
</dbReference>
<dbReference type="GO" id="GO:0005524">
    <property type="term" value="F:ATP binding"/>
    <property type="evidence" value="ECO:0007669"/>
    <property type="project" value="UniProtKB-UniRule"/>
</dbReference>
<dbReference type="GO" id="GO:0006420">
    <property type="term" value="P:arginyl-tRNA aminoacylation"/>
    <property type="evidence" value="ECO:0007669"/>
    <property type="project" value="UniProtKB-UniRule"/>
</dbReference>
<dbReference type="CDD" id="cd00671">
    <property type="entry name" value="ArgRS_core"/>
    <property type="match status" value="1"/>
</dbReference>
<dbReference type="Gene3D" id="3.30.1360.70">
    <property type="entry name" value="Arginyl tRNA synthetase N-terminal domain"/>
    <property type="match status" value="1"/>
</dbReference>
<dbReference type="Gene3D" id="3.40.50.620">
    <property type="entry name" value="HUPs"/>
    <property type="match status" value="1"/>
</dbReference>
<dbReference type="Gene3D" id="1.10.730.10">
    <property type="entry name" value="Isoleucyl-tRNA Synthetase, Domain 1"/>
    <property type="match status" value="1"/>
</dbReference>
<dbReference type="HAMAP" id="MF_00123">
    <property type="entry name" value="Arg_tRNA_synth"/>
    <property type="match status" value="1"/>
</dbReference>
<dbReference type="InterPro" id="IPR001412">
    <property type="entry name" value="aa-tRNA-synth_I_CS"/>
</dbReference>
<dbReference type="InterPro" id="IPR001278">
    <property type="entry name" value="Arg-tRNA-ligase"/>
</dbReference>
<dbReference type="InterPro" id="IPR005148">
    <property type="entry name" value="Arg-tRNA-synth_N"/>
</dbReference>
<dbReference type="InterPro" id="IPR036695">
    <property type="entry name" value="Arg-tRNA-synth_N_sf"/>
</dbReference>
<dbReference type="InterPro" id="IPR035684">
    <property type="entry name" value="ArgRS_core"/>
</dbReference>
<dbReference type="InterPro" id="IPR008909">
    <property type="entry name" value="DALR_anticod-bd"/>
</dbReference>
<dbReference type="InterPro" id="IPR014729">
    <property type="entry name" value="Rossmann-like_a/b/a_fold"/>
</dbReference>
<dbReference type="InterPro" id="IPR009080">
    <property type="entry name" value="tRNAsynth_Ia_anticodon-bd"/>
</dbReference>
<dbReference type="NCBIfam" id="TIGR00456">
    <property type="entry name" value="argS"/>
    <property type="match status" value="1"/>
</dbReference>
<dbReference type="PANTHER" id="PTHR11956:SF5">
    <property type="entry name" value="ARGININE--TRNA LIGASE, CYTOPLASMIC"/>
    <property type="match status" value="1"/>
</dbReference>
<dbReference type="PANTHER" id="PTHR11956">
    <property type="entry name" value="ARGINYL-TRNA SYNTHETASE"/>
    <property type="match status" value="1"/>
</dbReference>
<dbReference type="Pfam" id="PF03485">
    <property type="entry name" value="Arg_tRNA_synt_N"/>
    <property type="match status" value="1"/>
</dbReference>
<dbReference type="Pfam" id="PF05746">
    <property type="entry name" value="DALR_1"/>
    <property type="match status" value="1"/>
</dbReference>
<dbReference type="Pfam" id="PF00750">
    <property type="entry name" value="tRNA-synt_1d"/>
    <property type="match status" value="1"/>
</dbReference>
<dbReference type="PRINTS" id="PR01038">
    <property type="entry name" value="TRNASYNTHARG"/>
</dbReference>
<dbReference type="SMART" id="SM01016">
    <property type="entry name" value="Arg_tRNA_synt_N"/>
    <property type="match status" value="1"/>
</dbReference>
<dbReference type="SMART" id="SM00836">
    <property type="entry name" value="DALR_1"/>
    <property type="match status" value="1"/>
</dbReference>
<dbReference type="SUPFAM" id="SSF47323">
    <property type="entry name" value="Anticodon-binding domain of a subclass of class I aminoacyl-tRNA synthetases"/>
    <property type="match status" value="1"/>
</dbReference>
<dbReference type="SUPFAM" id="SSF55190">
    <property type="entry name" value="Arginyl-tRNA synthetase (ArgRS), N-terminal 'additional' domain"/>
    <property type="match status" value="1"/>
</dbReference>
<dbReference type="SUPFAM" id="SSF52374">
    <property type="entry name" value="Nucleotidylyl transferase"/>
    <property type="match status" value="1"/>
</dbReference>
<dbReference type="PROSITE" id="PS00178">
    <property type="entry name" value="AA_TRNA_LIGASE_I"/>
    <property type="match status" value="1"/>
</dbReference>
<accession>B0BW17</accession>
<comment type="catalytic activity">
    <reaction evidence="1">
        <text>tRNA(Arg) + L-arginine + ATP = L-arginyl-tRNA(Arg) + AMP + diphosphate</text>
        <dbReference type="Rhea" id="RHEA:20301"/>
        <dbReference type="Rhea" id="RHEA-COMP:9658"/>
        <dbReference type="Rhea" id="RHEA-COMP:9673"/>
        <dbReference type="ChEBI" id="CHEBI:30616"/>
        <dbReference type="ChEBI" id="CHEBI:32682"/>
        <dbReference type="ChEBI" id="CHEBI:33019"/>
        <dbReference type="ChEBI" id="CHEBI:78442"/>
        <dbReference type="ChEBI" id="CHEBI:78513"/>
        <dbReference type="ChEBI" id="CHEBI:456215"/>
        <dbReference type="EC" id="6.1.1.19"/>
    </reaction>
</comment>
<comment type="subunit">
    <text evidence="1">Monomer.</text>
</comment>
<comment type="subcellular location">
    <subcellularLocation>
        <location evidence="1">Cytoplasm</location>
    </subcellularLocation>
</comment>
<comment type="similarity">
    <text evidence="1">Belongs to the class-I aminoacyl-tRNA synthetase family.</text>
</comment>
<sequence length="576" mass="65142">MNIFNQLKQDIIVASKQLYNNQAIANTATIDIPKDSFNGDLSSNVAMIIAAKESIAPREVALKFKEVLITLPYIASIEIAGPGFINFTIKADSWQASIKDILQHEEKFFEIDIDKSRNINIEYVSANPTGPMHIGHARGAVYGDVLARILQKVSYSVTKEYYVNDAGSQINDLVSTVLLRYKEALGEQITIPAGLYPGEYLIPLGQILAKEYGNKLLTMNYDERFKIIKSFAVEKMLDLNRKDLADLGIKHDIFFSEQSLHDKGEIEETVKLLESMGLIYEGTLPAPKGKIHEEWDNRVQKLFKSTKYGDSQDRPIEKADGSWSYFASDLAYAKDKIERGANHLIYVLGADHSGYVKRIEAIVKALGKEQVKVDVKICQLVNFVENGVPVKMSKRLGSFASVQDVNNEVGKDIIRFMMLTRQNDKPLDFDLVKVKEQSRENPIFYVQYAHVRTISILSKARELMPESYNNFESGKYDLSLLSSEEEIEIIKLLVSWTKTLEASAKYFEPHRIAFYLINLASKFHSMWNFGKENSEYRFVIESNKELTLARLALASAIQKVIASGLEVIGVEPMNKM</sequence>
<protein>
    <recommendedName>
        <fullName evidence="1">Arginine--tRNA ligase</fullName>
        <ecNumber evidence="1">6.1.1.19</ecNumber>
    </recommendedName>
    <alternativeName>
        <fullName evidence="1">Arginyl-tRNA synthetase</fullName>
        <shortName evidence="1">ArgRS</shortName>
    </alternativeName>
</protein>
<feature type="chain" id="PRO_1000076226" description="Arginine--tRNA ligase">
    <location>
        <begin position="1"/>
        <end position="576"/>
    </location>
</feature>
<feature type="short sequence motif" description="'HIGH' region">
    <location>
        <begin position="126"/>
        <end position="136"/>
    </location>
</feature>
<evidence type="ECO:0000255" key="1">
    <source>
        <dbReference type="HAMAP-Rule" id="MF_00123"/>
    </source>
</evidence>
<organism>
    <name type="scientific">Rickettsia rickettsii (strain Iowa)</name>
    <dbReference type="NCBI Taxonomy" id="452659"/>
    <lineage>
        <taxon>Bacteria</taxon>
        <taxon>Pseudomonadati</taxon>
        <taxon>Pseudomonadota</taxon>
        <taxon>Alphaproteobacteria</taxon>
        <taxon>Rickettsiales</taxon>
        <taxon>Rickettsiaceae</taxon>
        <taxon>Rickettsieae</taxon>
        <taxon>Rickettsia</taxon>
        <taxon>spotted fever group</taxon>
    </lineage>
</organism>